<keyword id="KW-0413">Isomerase</keyword>
<keyword id="KW-0663">Pyridoxal phosphate</keyword>
<proteinExistence type="inferred from homology"/>
<comment type="function">
    <text evidence="1">Catalyzes the interconversion of L-alanine and D-alanine. May also act on other amino acids.</text>
</comment>
<comment type="catalytic activity">
    <reaction evidence="1">
        <text>L-alanine = D-alanine</text>
        <dbReference type="Rhea" id="RHEA:20249"/>
        <dbReference type="ChEBI" id="CHEBI:57416"/>
        <dbReference type="ChEBI" id="CHEBI:57972"/>
        <dbReference type="EC" id="5.1.1.1"/>
    </reaction>
</comment>
<comment type="cofactor">
    <cofactor evidence="1">
        <name>pyridoxal 5'-phosphate</name>
        <dbReference type="ChEBI" id="CHEBI:597326"/>
    </cofactor>
</comment>
<comment type="pathway">
    <text evidence="1">Amino-acid biosynthesis; D-alanine biosynthesis; D-alanine from L-alanine: step 1/1.</text>
</comment>
<comment type="similarity">
    <text evidence="1">Belongs to the alanine racemase family.</text>
</comment>
<reference key="1">
    <citation type="journal article" date="2009" name="Infect. Immun.">
        <title>Comparative genomics reveal extensive transposon-mediated genomic plasticity and diversity among potential effector proteins within the genus Coxiella.</title>
        <authorList>
            <person name="Beare P.A."/>
            <person name="Unsworth N."/>
            <person name="Andoh M."/>
            <person name="Voth D.E."/>
            <person name="Omsland A."/>
            <person name="Gilk S.D."/>
            <person name="Williams K.P."/>
            <person name="Sobral B.W."/>
            <person name="Kupko J.J. III"/>
            <person name="Porcella S.F."/>
            <person name="Samuel J.E."/>
            <person name="Heinzen R.A."/>
        </authorList>
    </citation>
    <scope>NUCLEOTIDE SEQUENCE [LARGE SCALE GENOMIC DNA]</scope>
    <source>
        <strain>CbuG_Q212</strain>
    </source>
</reference>
<name>ALR_COXB2</name>
<feature type="chain" id="PRO_1000138592" description="Alanine racemase">
    <location>
        <begin position="1"/>
        <end position="364"/>
    </location>
</feature>
<feature type="active site" description="Proton acceptor; specific for D-alanine" evidence="1">
    <location>
        <position position="34"/>
    </location>
</feature>
<feature type="active site" description="Proton acceptor; specific for L-alanine" evidence="1">
    <location>
        <position position="259"/>
    </location>
</feature>
<feature type="binding site" evidence="1">
    <location>
        <position position="129"/>
    </location>
    <ligand>
        <name>substrate</name>
    </ligand>
</feature>
<feature type="binding site" evidence="1">
    <location>
        <position position="307"/>
    </location>
    <ligand>
        <name>substrate</name>
    </ligand>
</feature>
<feature type="modified residue" description="N6-(pyridoxal phosphate)lysine" evidence="1">
    <location>
        <position position="34"/>
    </location>
</feature>
<protein>
    <recommendedName>
        <fullName evidence="1">Alanine racemase</fullName>
        <ecNumber evidence="1">5.1.1.1</ecNumber>
    </recommendedName>
</protein>
<gene>
    <name type="primary">alr</name>
    <name type="ordered locus">CbuG_1133</name>
</gene>
<evidence type="ECO:0000255" key="1">
    <source>
        <dbReference type="HAMAP-Rule" id="MF_01201"/>
    </source>
</evidence>
<sequence>MNRATATINVTALKHNLSQIKALAPKSLAWAMIKSNGYGHGLVRVAKALSDANAFGVACIDEALTLREVGIKSPIIVMKGFYNEAELSQFARHRLGAVIHCSDQVSLLKKTNLTSSLSVWLKIDTGMNRLGFSVEQSPAVYNQLKTSSSIQKPIGLMTHLADADNENKTFTELQIKRFFSVTEKMIGPKSIVNSAGFFAYPNALVDWIRPGIILYGISPFGINYNSFKEKIEKKFRPVMTLSAKIIAIKNRRKNDSVGYGCTWSCPEDMPIAIVSIGYGDGYPRHAPSGTPVLLNGKICPLIGRVSMDMIAIDLRSQPNAQVGDDVILWGEGLPVEIIAEKAGTIAYELLCKITQRVQFIEIEK</sequence>
<accession>B6J0J1</accession>
<dbReference type="EC" id="5.1.1.1" evidence="1"/>
<dbReference type="EMBL" id="CP001019">
    <property type="protein sequence ID" value="ACJ18469.1"/>
    <property type="molecule type" value="Genomic_DNA"/>
</dbReference>
<dbReference type="RefSeq" id="WP_012570109.1">
    <property type="nucleotide sequence ID" value="NC_011527.1"/>
</dbReference>
<dbReference type="SMR" id="B6J0J1"/>
<dbReference type="KEGG" id="cbg:CbuG_1133"/>
<dbReference type="HOGENOM" id="CLU_028393_1_0_6"/>
<dbReference type="UniPathway" id="UPA00042">
    <property type="reaction ID" value="UER00497"/>
</dbReference>
<dbReference type="GO" id="GO:0005829">
    <property type="term" value="C:cytosol"/>
    <property type="evidence" value="ECO:0007669"/>
    <property type="project" value="TreeGrafter"/>
</dbReference>
<dbReference type="GO" id="GO:0008784">
    <property type="term" value="F:alanine racemase activity"/>
    <property type="evidence" value="ECO:0007669"/>
    <property type="project" value="UniProtKB-UniRule"/>
</dbReference>
<dbReference type="GO" id="GO:0030170">
    <property type="term" value="F:pyridoxal phosphate binding"/>
    <property type="evidence" value="ECO:0007669"/>
    <property type="project" value="UniProtKB-UniRule"/>
</dbReference>
<dbReference type="GO" id="GO:0030632">
    <property type="term" value="P:D-alanine biosynthetic process"/>
    <property type="evidence" value="ECO:0007669"/>
    <property type="project" value="UniProtKB-UniRule"/>
</dbReference>
<dbReference type="CDD" id="cd06827">
    <property type="entry name" value="PLPDE_III_AR_proteobact"/>
    <property type="match status" value="1"/>
</dbReference>
<dbReference type="FunFam" id="2.40.37.10:FF:000002">
    <property type="entry name" value="Alanine racemase"/>
    <property type="match status" value="1"/>
</dbReference>
<dbReference type="FunFam" id="3.20.20.10:FF:000044">
    <property type="entry name" value="Alanine racemase"/>
    <property type="match status" value="1"/>
</dbReference>
<dbReference type="Gene3D" id="3.20.20.10">
    <property type="entry name" value="Alanine racemase"/>
    <property type="match status" value="1"/>
</dbReference>
<dbReference type="Gene3D" id="2.40.37.10">
    <property type="entry name" value="Lyase, Ornithine Decarboxylase, Chain A, domain 1"/>
    <property type="match status" value="1"/>
</dbReference>
<dbReference type="HAMAP" id="MF_01201">
    <property type="entry name" value="Ala_racemase"/>
    <property type="match status" value="1"/>
</dbReference>
<dbReference type="InterPro" id="IPR000821">
    <property type="entry name" value="Ala_racemase"/>
</dbReference>
<dbReference type="InterPro" id="IPR009006">
    <property type="entry name" value="Ala_racemase/Decarboxylase_C"/>
</dbReference>
<dbReference type="InterPro" id="IPR011079">
    <property type="entry name" value="Ala_racemase_C"/>
</dbReference>
<dbReference type="InterPro" id="IPR001608">
    <property type="entry name" value="Ala_racemase_N"/>
</dbReference>
<dbReference type="InterPro" id="IPR029066">
    <property type="entry name" value="PLP-binding_barrel"/>
</dbReference>
<dbReference type="NCBIfam" id="TIGR00492">
    <property type="entry name" value="alr"/>
    <property type="match status" value="1"/>
</dbReference>
<dbReference type="PANTHER" id="PTHR30511">
    <property type="entry name" value="ALANINE RACEMASE"/>
    <property type="match status" value="1"/>
</dbReference>
<dbReference type="PANTHER" id="PTHR30511:SF4">
    <property type="entry name" value="ALANINE RACEMASE, BIOSYNTHETIC"/>
    <property type="match status" value="1"/>
</dbReference>
<dbReference type="Pfam" id="PF00842">
    <property type="entry name" value="Ala_racemase_C"/>
    <property type="match status" value="1"/>
</dbReference>
<dbReference type="Pfam" id="PF01168">
    <property type="entry name" value="Ala_racemase_N"/>
    <property type="match status" value="1"/>
</dbReference>
<dbReference type="PRINTS" id="PR00992">
    <property type="entry name" value="ALARACEMASE"/>
</dbReference>
<dbReference type="SMART" id="SM01005">
    <property type="entry name" value="Ala_racemase_C"/>
    <property type="match status" value="1"/>
</dbReference>
<dbReference type="SUPFAM" id="SSF50621">
    <property type="entry name" value="Alanine racemase C-terminal domain-like"/>
    <property type="match status" value="1"/>
</dbReference>
<dbReference type="SUPFAM" id="SSF51419">
    <property type="entry name" value="PLP-binding barrel"/>
    <property type="match status" value="1"/>
</dbReference>
<organism>
    <name type="scientific">Coxiella burnetii (strain CbuG_Q212)</name>
    <name type="common">Coxiella burnetii (strain Q212)</name>
    <dbReference type="NCBI Taxonomy" id="434923"/>
    <lineage>
        <taxon>Bacteria</taxon>
        <taxon>Pseudomonadati</taxon>
        <taxon>Pseudomonadota</taxon>
        <taxon>Gammaproteobacteria</taxon>
        <taxon>Legionellales</taxon>
        <taxon>Coxiellaceae</taxon>
        <taxon>Coxiella</taxon>
    </lineage>
</organism>